<evidence type="ECO:0000305" key="1"/>
<comment type="similarity">
    <text evidence="1">Belongs to the RutC family.</text>
</comment>
<keyword id="KW-1185">Reference proteome</keyword>
<organism>
    <name type="scientific">Buchnera aphidicola subsp. Acyrthosiphon pisum (strain APS)</name>
    <name type="common">Acyrthosiphon pisum symbiotic bacterium</name>
    <dbReference type="NCBI Taxonomy" id="107806"/>
    <lineage>
        <taxon>Bacteria</taxon>
        <taxon>Pseudomonadati</taxon>
        <taxon>Pseudomonadota</taxon>
        <taxon>Gammaproteobacteria</taxon>
        <taxon>Enterobacterales</taxon>
        <taxon>Erwiniaceae</taxon>
        <taxon>Buchnera</taxon>
    </lineage>
</organism>
<protein>
    <recommendedName>
        <fullName>RutC family protein BU371</fullName>
    </recommendedName>
</protein>
<gene>
    <name type="ordered locus">BU371</name>
</gene>
<reference key="1">
    <citation type="journal article" date="2000" name="Nature">
        <title>Genome sequence of the endocellular bacterial symbiont of aphids Buchnera sp. APS.</title>
        <authorList>
            <person name="Shigenobu S."/>
            <person name="Watanabe H."/>
            <person name="Hattori M."/>
            <person name="Sakaki Y."/>
            <person name="Ishikawa H."/>
        </authorList>
    </citation>
    <scope>NUCLEOTIDE SEQUENCE [LARGE SCALE GENOMIC DNA]</scope>
    <source>
        <strain>APS</strain>
    </source>
</reference>
<proteinExistence type="inferred from homology"/>
<dbReference type="EMBL" id="BA000003">
    <property type="protein sequence ID" value="BAB13075.1"/>
    <property type="molecule type" value="Genomic_DNA"/>
</dbReference>
<dbReference type="RefSeq" id="NP_240189.1">
    <property type="nucleotide sequence ID" value="NC_002528.1"/>
</dbReference>
<dbReference type="RefSeq" id="WP_009874329.1">
    <property type="nucleotide sequence ID" value="NZ_AP036055.1"/>
</dbReference>
<dbReference type="SMR" id="P57452"/>
<dbReference type="STRING" id="563178.BUAP5A_364"/>
<dbReference type="EnsemblBacteria" id="BAB13075">
    <property type="protein sequence ID" value="BAB13075"/>
    <property type="gene ID" value="BAB13075"/>
</dbReference>
<dbReference type="KEGG" id="buc:BU371"/>
<dbReference type="PATRIC" id="fig|107806.10.peg.385"/>
<dbReference type="eggNOG" id="COG0251">
    <property type="taxonomic scope" value="Bacteria"/>
</dbReference>
<dbReference type="HOGENOM" id="CLU_100715_7_1_6"/>
<dbReference type="BioCyc" id="BAPH107806:GBZJ-364-MONOMER"/>
<dbReference type="Proteomes" id="UP000001806">
    <property type="component" value="Chromosome"/>
</dbReference>
<dbReference type="GO" id="GO:0005829">
    <property type="term" value="C:cytosol"/>
    <property type="evidence" value="ECO:0007669"/>
    <property type="project" value="TreeGrafter"/>
</dbReference>
<dbReference type="GO" id="GO:0019239">
    <property type="term" value="F:deaminase activity"/>
    <property type="evidence" value="ECO:0007669"/>
    <property type="project" value="TreeGrafter"/>
</dbReference>
<dbReference type="CDD" id="cd00448">
    <property type="entry name" value="YjgF_YER057c_UK114_family"/>
    <property type="match status" value="1"/>
</dbReference>
<dbReference type="FunFam" id="3.30.1330.40:FF:000001">
    <property type="entry name" value="L-PSP family endoribonuclease"/>
    <property type="match status" value="1"/>
</dbReference>
<dbReference type="Gene3D" id="3.30.1330.40">
    <property type="entry name" value="RutC-like"/>
    <property type="match status" value="1"/>
</dbReference>
<dbReference type="InterPro" id="IPR006056">
    <property type="entry name" value="RidA"/>
</dbReference>
<dbReference type="InterPro" id="IPR035959">
    <property type="entry name" value="RutC-like_sf"/>
</dbReference>
<dbReference type="InterPro" id="IPR006175">
    <property type="entry name" value="YjgF/YER057c/UK114"/>
</dbReference>
<dbReference type="NCBIfam" id="TIGR00004">
    <property type="entry name" value="Rid family detoxifying hydrolase"/>
    <property type="match status" value="1"/>
</dbReference>
<dbReference type="PANTHER" id="PTHR11803">
    <property type="entry name" value="2-IMINOBUTANOATE/2-IMINOPROPANOATE DEAMINASE RIDA"/>
    <property type="match status" value="1"/>
</dbReference>
<dbReference type="PANTHER" id="PTHR11803:SF39">
    <property type="entry name" value="2-IMINOBUTANOATE_2-IMINOPROPANOATE DEAMINASE"/>
    <property type="match status" value="1"/>
</dbReference>
<dbReference type="Pfam" id="PF01042">
    <property type="entry name" value="Ribonuc_L-PSP"/>
    <property type="match status" value="1"/>
</dbReference>
<dbReference type="SUPFAM" id="SSF55298">
    <property type="entry name" value="YjgF-like"/>
    <property type="match status" value="1"/>
</dbReference>
<name>Y371_BUCAI</name>
<sequence>MNHIIETKDAPKPIGPYSQALKIDNFIILSGQIPIDVISNQIPENIAEQTYLVLKNIKLILVHAKFQVHNIIKTTVFTTDLKKINIINEIYKKFFIDNKSNFPARSCVEVQKLPKNVKIEIEAMAFKK</sequence>
<feature type="chain" id="PRO_0000170331" description="RutC family protein BU371">
    <location>
        <begin position="1"/>
        <end position="128"/>
    </location>
</feature>
<accession>P57452</accession>